<accession>Q0TEI1</accession>
<reference key="1">
    <citation type="journal article" date="2006" name="Mol. Microbiol.">
        <title>Role of pathogenicity island-associated integrases in the genome plasticity of uropathogenic Escherichia coli strain 536.</title>
        <authorList>
            <person name="Hochhut B."/>
            <person name="Wilde C."/>
            <person name="Balling G."/>
            <person name="Middendorf B."/>
            <person name="Dobrindt U."/>
            <person name="Brzuszkiewicz E."/>
            <person name="Gottschalk G."/>
            <person name="Carniel E."/>
            <person name="Hacker J."/>
        </authorList>
    </citation>
    <scope>NUCLEOTIDE SEQUENCE [LARGE SCALE GENOMIC DNA]</scope>
    <source>
        <strain>536 / UPEC</strain>
    </source>
</reference>
<gene>
    <name evidence="1" type="primary">recA</name>
    <name type="ordered locus">ECP_2659</name>
</gene>
<proteinExistence type="inferred from homology"/>
<feature type="chain" id="PRO_1000047913" description="Protein RecA">
    <location>
        <begin position="1"/>
        <end position="353"/>
    </location>
</feature>
<feature type="region of interest" description="Disordered" evidence="2">
    <location>
        <begin position="330"/>
        <end position="353"/>
    </location>
</feature>
<feature type="compositionally biased region" description="Acidic residues" evidence="2">
    <location>
        <begin position="339"/>
        <end position="353"/>
    </location>
</feature>
<feature type="binding site" evidence="1">
    <location>
        <begin position="67"/>
        <end position="74"/>
    </location>
    <ligand>
        <name>ATP</name>
        <dbReference type="ChEBI" id="CHEBI:30616"/>
    </ligand>
</feature>
<comment type="function">
    <text evidence="1">Can catalyze the hydrolysis of ATP in the presence of single-stranded DNA, the ATP-dependent uptake of single-stranded DNA by duplex DNA, and the ATP-dependent hybridization of homologous single-stranded DNAs. It interacts with LexA causing its activation and leading to its autocatalytic cleavage.</text>
</comment>
<comment type="subcellular location">
    <subcellularLocation>
        <location evidence="1">Cytoplasm</location>
    </subcellularLocation>
</comment>
<comment type="similarity">
    <text evidence="1">Belongs to the RecA family.</text>
</comment>
<name>RECA_ECOL5</name>
<dbReference type="EMBL" id="CP000247">
    <property type="protein sequence ID" value="ABG70648.1"/>
    <property type="molecule type" value="Genomic_DNA"/>
</dbReference>
<dbReference type="RefSeq" id="WP_000963143.1">
    <property type="nucleotide sequence ID" value="NC_008253.1"/>
</dbReference>
<dbReference type="SMR" id="Q0TEI1"/>
<dbReference type="GeneID" id="93779312"/>
<dbReference type="KEGG" id="ecp:ECP_2659"/>
<dbReference type="HOGENOM" id="CLU_040469_3_2_6"/>
<dbReference type="Proteomes" id="UP000009182">
    <property type="component" value="Chromosome"/>
</dbReference>
<dbReference type="GO" id="GO:0005829">
    <property type="term" value="C:cytosol"/>
    <property type="evidence" value="ECO:0007669"/>
    <property type="project" value="TreeGrafter"/>
</dbReference>
<dbReference type="GO" id="GO:0005524">
    <property type="term" value="F:ATP binding"/>
    <property type="evidence" value="ECO:0007669"/>
    <property type="project" value="UniProtKB-UniRule"/>
</dbReference>
<dbReference type="GO" id="GO:0016887">
    <property type="term" value="F:ATP hydrolysis activity"/>
    <property type="evidence" value="ECO:0007669"/>
    <property type="project" value="InterPro"/>
</dbReference>
<dbReference type="GO" id="GO:0140664">
    <property type="term" value="F:ATP-dependent DNA damage sensor activity"/>
    <property type="evidence" value="ECO:0007669"/>
    <property type="project" value="InterPro"/>
</dbReference>
<dbReference type="GO" id="GO:0003684">
    <property type="term" value="F:damaged DNA binding"/>
    <property type="evidence" value="ECO:0007669"/>
    <property type="project" value="UniProtKB-UniRule"/>
</dbReference>
<dbReference type="GO" id="GO:0003697">
    <property type="term" value="F:single-stranded DNA binding"/>
    <property type="evidence" value="ECO:0007669"/>
    <property type="project" value="UniProtKB-UniRule"/>
</dbReference>
<dbReference type="GO" id="GO:0006310">
    <property type="term" value="P:DNA recombination"/>
    <property type="evidence" value="ECO:0007669"/>
    <property type="project" value="UniProtKB-UniRule"/>
</dbReference>
<dbReference type="GO" id="GO:0006281">
    <property type="term" value="P:DNA repair"/>
    <property type="evidence" value="ECO:0007669"/>
    <property type="project" value="UniProtKB-UniRule"/>
</dbReference>
<dbReference type="GO" id="GO:0009432">
    <property type="term" value="P:SOS response"/>
    <property type="evidence" value="ECO:0007669"/>
    <property type="project" value="UniProtKB-UniRule"/>
</dbReference>
<dbReference type="CDD" id="cd00983">
    <property type="entry name" value="RecA"/>
    <property type="match status" value="1"/>
</dbReference>
<dbReference type="FunFam" id="3.40.50.300:FF:000087">
    <property type="entry name" value="Recombinase RecA"/>
    <property type="match status" value="1"/>
</dbReference>
<dbReference type="Gene3D" id="3.40.50.300">
    <property type="entry name" value="P-loop containing nucleotide triphosphate hydrolases"/>
    <property type="match status" value="1"/>
</dbReference>
<dbReference type="HAMAP" id="MF_00268">
    <property type="entry name" value="RecA"/>
    <property type="match status" value="1"/>
</dbReference>
<dbReference type="InterPro" id="IPR003593">
    <property type="entry name" value="AAA+_ATPase"/>
</dbReference>
<dbReference type="InterPro" id="IPR013765">
    <property type="entry name" value="DNA_recomb/repair_RecA"/>
</dbReference>
<dbReference type="InterPro" id="IPR020584">
    <property type="entry name" value="DNA_recomb/repair_RecA_CS"/>
</dbReference>
<dbReference type="InterPro" id="IPR027417">
    <property type="entry name" value="P-loop_NTPase"/>
</dbReference>
<dbReference type="InterPro" id="IPR049261">
    <property type="entry name" value="RecA-like_C"/>
</dbReference>
<dbReference type="InterPro" id="IPR049428">
    <property type="entry name" value="RecA-like_N"/>
</dbReference>
<dbReference type="InterPro" id="IPR020588">
    <property type="entry name" value="RecA_ATP-bd"/>
</dbReference>
<dbReference type="InterPro" id="IPR023400">
    <property type="entry name" value="RecA_C_sf"/>
</dbReference>
<dbReference type="InterPro" id="IPR020587">
    <property type="entry name" value="RecA_monomer-monomer_interface"/>
</dbReference>
<dbReference type="NCBIfam" id="TIGR02012">
    <property type="entry name" value="tigrfam_recA"/>
    <property type="match status" value="1"/>
</dbReference>
<dbReference type="PANTHER" id="PTHR45900:SF1">
    <property type="entry name" value="MITOCHONDRIAL DNA REPAIR PROTEIN RECA HOMOLOG-RELATED"/>
    <property type="match status" value="1"/>
</dbReference>
<dbReference type="PANTHER" id="PTHR45900">
    <property type="entry name" value="RECA"/>
    <property type="match status" value="1"/>
</dbReference>
<dbReference type="Pfam" id="PF00154">
    <property type="entry name" value="RecA"/>
    <property type="match status" value="1"/>
</dbReference>
<dbReference type="Pfam" id="PF21096">
    <property type="entry name" value="RecA_C"/>
    <property type="match status" value="1"/>
</dbReference>
<dbReference type="PRINTS" id="PR00142">
    <property type="entry name" value="RECA"/>
</dbReference>
<dbReference type="SMART" id="SM00382">
    <property type="entry name" value="AAA"/>
    <property type="match status" value="1"/>
</dbReference>
<dbReference type="SUPFAM" id="SSF52540">
    <property type="entry name" value="P-loop containing nucleoside triphosphate hydrolases"/>
    <property type="match status" value="1"/>
</dbReference>
<dbReference type="SUPFAM" id="SSF54752">
    <property type="entry name" value="RecA protein, C-terminal domain"/>
    <property type="match status" value="1"/>
</dbReference>
<dbReference type="PROSITE" id="PS00321">
    <property type="entry name" value="RECA_1"/>
    <property type="match status" value="1"/>
</dbReference>
<dbReference type="PROSITE" id="PS50162">
    <property type="entry name" value="RECA_2"/>
    <property type="match status" value="1"/>
</dbReference>
<dbReference type="PROSITE" id="PS50163">
    <property type="entry name" value="RECA_3"/>
    <property type="match status" value="1"/>
</dbReference>
<sequence length="353" mass="37973">MAIDENKQKALAAALGQIEKQFGKGSIMRLGEDRSMDVETISTGSLSLDIALGAGGLPMGRIVEIYGPESSGKTTLTLQVIAAAQREGKTCAFIDAEHALDPIYARKLGVDIDNLLCSQPDTGEQALEICDALARSGAVDVIVVDSVAALTPKAEIEGEIGDSHMGLAARMMSQAMRKLAGNLKQSNTLLIFINQIRMKIGVMFGNPETTTGGNALKFYASVRLDIRRIGAVKEGENVVGSETRVKVVKNKIAAPFKQAEFQILYGEGINFYGELVDLGVKEKLIEKAGAWYSYKGEKIGQGKANATAWLKDNPETAKEIEKKVRELLLSNPNSTPDFSVDDSEGVAETNEDF</sequence>
<evidence type="ECO:0000255" key="1">
    <source>
        <dbReference type="HAMAP-Rule" id="MF_00268"/>
    </source>
</evidence>
<evidence type="ECO:0000256" key="2">
    <source>
        <dbReference type="SAM" id="MobiDB-lite"/>
    </source>
</evidence>
<organism>
    <name type="scientific">Escherichia coli O6:K15:H31 (strain 536 / UPEC)</name>
    <dbReference type="NCBI Taxonomy" id="362663"/>
    <lineage>
        <taxon>Bacteria</taxon>
        <taxon>Pseudomonadati</taxon>
        <taxon>Pseudomonadota</taxon>
        <taxon>Gammaproteobacteria</taxon>
        <taxon>Enterobacterales</taxon>
        <taxon>Enterobacteriaceae</taxon>
        <taxon>Escherichia</taxon>
    </lineage>
</organism>
<protein>
    <recommendedName>
        <fullName evidence="1">Protein RecA</fullName>
    </recommendedName>
    <alternativeName>
        <fullName evidence="1">Recombinase A</fullName>
    </alternativeName>
</protein>
<keyword id="KW-0067">ATP-binding</keyword>
<keyword id="KW-0963">Cytoplasm</keyword>
<keyword id="KW-0227">DNA damage</keyword>
<keyword id="KW-0233">DNA recombination</keyword>
<keyword id="KW-0234">DNA repair</keyword>
<keyword id="KW-0238">DNA-binding</keyword>
<keyword id="KW-0547">Nucleotide-binding</keyword>
<keyword id="KW-0742">SOS response</keyword>